<sequence>MPYLEIVLALLVLSFQLGHSDDDSGMCMAKEPCSEAPQQETKVDLYKATDNKYVALIQEALASYEPCQQANCSCHADVLKTDLRPFKGGISEQMVERARSYGTKYQIVDHRLYRQKDCMFPARCSGVEHFIKPNLPHLPDMELIINCRDWPQINRHWKQEKLPVLSFSKTDDYLDIMYPTWGFWEGGPAISLYPTGLGRWDQHRVSIKKAADSWKWEKKKAKAFFRGSRTSDERDPLVLLSRRKPELVDAQYTKNQAWKSPKDTLNAKPAQEVRLEDHCQYKYLFNFRGVAASFRFKHLFLCRSLVFHVGSEWQEFFYPSLKPWVHYVPVRVGATQEELEELIEFFAEHDDLAREIADRGFEHVWKHLRMKDVECYWRKLLRRYGKLVKYEVKRDHSLVEVY</sequence>
<reference evidence="4" key="1">
    <citation type="journal article" date="2007" name="Science">
        <title>Genome sequence of Aedes aegypti, a major arbovirus vector.</title>
        <authorList>
            <person name="Nene V."/>
            <person name="Wortman J.R."/>
            <person name="Lawson D."/>
            <person name="Haas B.J."/>
            <person name="Kodira C.D."/>
            <person name="Tu Z.J."/>
            <person name="Loftus B.J."/>
            <person name="Xi Z."/>
            <person name="Megy K."/>
            <person name="Grabherr M."/>
            <person name="Ren Q."/>
            <person name="Zdobnov E.M."/>
            <person name="Lobo N.F."/>
            <person name="Campbell K.S."/>
            <person name="Brown S.E."/>
            <person name="Bonaldo M.F."/>
            <person name="Zhu J."/>
            <person name="Sinkins S.P."/>
            <person name="Hogenkamp D.G."/>
            <person name="Amedeo P."/>
            <person name="Arensburger P."/>
            <person name="Atkinson P.W."/>
            <person name="Bidwell S.L."/>
            <person name="Biedler J."/>
            <person name="Birney E."/>
            <person name="Bruggner R.V."/>
            <person name="Costas J."/>
            <person name="Coy M.R."/>
            <person name="Crabtree J."/>
            <person name="Crawford M."/>
            <person name="DeBruyn B."/>
            <person name="DeCaprio D."/>
            <person name="Eiglmeier K."/>
            <person name="Eisenstadt E."/>
            <person name="El-Dorry H."/>
            <person name="Gelbart W.M."/>
            <person name="Gomes S.L."/>
            <person name="Hammond M."/>
            <person name="Hannick L.I."/>
            <person name="Hogan J.R."/>
            <person name="Holmes M.H."/>
            <person name="Jaffe D."/>
            <person name="Johnston S.J."/>
            <person name="Kennedy R.C."/>
            <person name="Koo H."/>
            <person name="Kravitz S."/>
            <person name="Kriventseva E.V."/>
            <person name="Kulp D."/>
            <person name="Labutti K."/>
            <person name="Lee E."/>
            <person name="Li S."/>
            <person name="Lovin D.D."/>
            <person name="Mao C."/>
            <person name="Mauceli E."/>
            <person name="Menck C.F."/>
            <person name="Miller J.R."/>
            <person name="Montgomery P."/>
            <person name="Mori A."/>
            <person name="Nascimento A.L."/>
            <person name="Naveira H.F."/>
            <person name="Nusbaum C."/>
            <person name="O'Leary S.B."/>
            <person name="Orvis J."/>
            <person name="Pertea M."/>
            <person name="Quesneville H."/>
            <person name="Reidenbach K.R."/>
            <person name="Rogers Y.-H.C."/>
            <person name="Roth C.W."/>
            <person name="Schneider J.R."/>
            <person name="Schatz M."/>
            <person name="Shumway M."/>
            <person name="Stanke M."/>
            <person name="Stinson E.O."/>
            <person name="Tubio J.M.C."/>
            <person name="Vanzee J.P."/>
            <person name="Verjovski-Almeida S."/>
            <person name="Werner D."/>
            <person name="White O.R."/>
            <person name="Wyder S."/>
            <person name="Zeng Q."/>
            <person name="Zhao Q."/>
            <person name="Zhao Y."/>
            <person name="Hill C.A."/>
            <person name="Raikhel A.S."/>
            <person name="Soares M.B."/>
            <person name="Knudson D.L."/>
            <person name="Lee N.H."/>
            <person name="Galagan J."/>
            <person name="Salzberg S.L."/>
            <person name="Paulsen I.T."/>
            <person name="Dimopoulos G."/>
            <person name="Collins F.H."/>
            <person name="Bruce B."/>
            <person name="Fraser-Liggett C.M."/>
            <person name="Severson D.W."/>
        </authorList>
    </citation>
    <scope>NUCLEOTIDE SEQUENCE [LARGE SCALE GENOMIC DNA]</scope>
    <source>
        <strain>LVPib12</strain>
    </source>
</reference>
<feature type="signal peptide" evidence="2">
    <location>
        <begin position="1"/>
        <end position="20"/>
    </location>
</feature>
<feature type="chain" id="PRO_0000342689" description="O-glucosyltransferase rumi homolog">
    <location>
        <begin position="21"/>
        <end position="402"/>
    </location>
</feature>
<feature type="region of interest" description="Interaction with the consensus sequence C-X-S-X-[PA]-C in peptide substrates" evidence="1">
    <location>
        <begin position="189"/>
        <end position="194"/>
    </location>
</feature>
<feature type="active site" description="Proton donor/acceptor" evidence="1">
    <location>
        <position position="149"/>
    </location>
</feature>
<feature type="binding site" evidence="1">
    <location>
        <begin position="226"/>
        <end position="230"/>
    </location>
    <ligand>
        <name>UDP-alpha-D-glucose</name>
        <dbReference type="ChEBI" id="CHEBI:58885"/>
    </ligand>
</feature>
<feature type="binding site" evidence="1">
    <location>
        <position position="234"/>
    </location>
    <ligand>
        <name>UDP-alpha-D-glucose</name>
        <dbReference type="ChEBI" id="CHEBI:58885"/>
    </ligand>
</feature>
<feature type="binding site" evidence="1">
    <location>
        <begin position="273"/>
        <end position="275"/>
    </location>
    <ligand>
        <name>UDP-alpha-D-glucose</name>
        <dbReference type="ChEBI" id="CHEBI:58885"/>
    </ligand>
</feature>
<feature type="binding site" evidence="1">
    <location>
        <begin position="291"/>
        <end position="295"/>
    </location>
    <ligand>
        <name>UDP-alpha-D-glucose</name>
        <dbReference type="ChEBI" id="CHEBI:58885"/>
    </ligand>
</feature>
<feature type="site" description="Interaction with the consensus sequence C-X-S-X-[PA]-C in peptide substrates" evidence="1">
    <location>
        <position position="120"/>
    </location>
</feature>
<feature type="site" description="Interaction with the consensus sequence C-X-S-X-[PA]-C in peptide substrates" evidence="1">
    <location>
        <position position="229"/>
    </location>
</feature>
<feature type="site" description="Interaction with the consensus sequence C-X-S-X-[PA]-C in peptide substrates" evidence="1">
    <location>
        <position position="256"/>
    </location>
</feature>
<feature type="glycosylation site" description="N-linked (GlcNAc...) asparagine" evidence="2">
    <location>
        <position position="71"/>
    </location>
</feature>
<feature type="disulfide bond" evidence="1">
    <location>
        <begin position="67"/>
        <end position="74"/>
    </location>
</feature>
<feature type="disulfide bond" evidence="1">
    <location>
        <begin position="72"/>
        <end position="375"/>
    </location>
</feature>
<feature type="disulfide bond" evidence="1">
    <location>
        <begin position="118"/>
        <end position="124"/>
    </location>
</feature>
<feature type="disulfide bond" evidence="1">
    <location>
        <begin position="279"/>
        <end position="302"/>
    </location>
</feature>
<organism>
    <name type="scientific">Aedes aegypti</name>
    <name type="common">Yellowfever mosquito</name>
    <name type="synonym">Culex aegypti</name>
    <dbReference type="NCBI Taxonomy" id="7159"/>
    <lineage>
        <taxon>Eukaryota</taxon>
        <taxon>Metazoa</taxon>
        <taxon>Ecdysozoa</taxon>
        <taxon>Arthropoda</taxon>
        <taxon>Hexapoda</taxon>
        <taxon>Insecta</taxon>
        <taxon>Pterygota</taxon>
        <taxon>Neoptera</taxon>
        <taxon>Endopterygota</taxon>
        <taxon>Diptera</taxon>
        <taxon>Nematocera</taxon>
        <taxon>Culicoidea</taxon>
        <taxon>Culicidae</taxon>
        <taxon>Culicinae</taxon>
        <taxon>Aedini</taxon>
        <taxon>Aedes</taxon>
        <taxon>Stegomyia</taxon>
    </lineage>
</organism>
<keyword id="KW-1015">Disulfide bond</keyword>
<keyword id="KW-0256">Endoplasmic reticulum</keyword>
<keyword id="KW-0325">Glycoprotein</keyword>
<keyword id="KW-0328">Glycosyltransferase</keyword>
<keyword id="KW-1185">Reference proteome</keyword>
<keyword id="KW-0964">Secreted</keyword>
<keyword id="KW-0732">Signal</keyword>
<keyword id="KW-0808">Transferase</keyword>
<proteinExistence type="inferred from homology"/>
<comment type="function">
    <text evidence="1">Protein O-glucosyltransferase. Catalyzes the reaction that attaches glucose through an O-glycosidic linkage to a conserved serine residue found in the consensus sequence C-X-S-X-[PA]-C in epidermal growth factor-like repeats. Regulates Notch signaling by glucosylating Notch in the ER, glucosylation is required for the correct folding and cleavage of Notch.</text>
</comment>
<comment type="pathway">
    <text evidence="1">Protein modification; protein glycosylation.</text>
</comment>
<comment type="subcellular location">
    <subcellularLocation>
        <location evidence="1">Endoplasmic reticulum lumen</location>
    </subcellularLocation>
    <subcellularLocation>
        <location evidence="3">Secreted</location>
    </subcellularLocation>
</comment>
<comment type="similarity">
    <text evidence="3">Belongs to the glycosyltransferase 90 family.</text>
</comment>
<gene>
    <name type="ORF">AAEL011121</name>
</gene>
<name>RUMI_AEDAE</name>
<evidence type="ECO:0000250" key="1">
    <source>
        <dbReference type="UniProtKB" id="Q8T045"/>
    </source>
</evidence>
<evidence type="ECO:0000255" key="2"/>
<evidence type="ECO:0000305" key="3"/>
<evidence type="ECO:0000312" key="4">
    <source>
        <dbReference type="EMBL" id="EAT36834.1"/>
    </source>
</evidence>
<accession>Q16QY8</accession>
<dbReference type="EC" id="2.4.1.-" evidence="1"/>
<dbReference type="EMBL" id="CH477727">
    <property type="protein sequence ID" value="EAT36834.1"/>
    <property type="molecule type" value="Genomic_DNA"/>
</dbReference>
<dbReference type="SMR" id="Q16QY8"/>
<dbReference type="FunCoup" id="Q16QY8">
    <property type="interactions" value="1779"/>
</dbReference>
<dbReference type="STRING" id="7159.Q16QY8"/>
<dbReference type="CAZy" id="GT90">
    <property type="family name" value="Glycosyltransferase Family 90"/>
</dbReference>
<dbReference type="PaxDb" id="7159-AAEL011121-PA"/>
<dbReference type="EnsemblMetazoa" id="AAEL011121-RA">
    <property type="protein sequence ID" value="AAEL011121-PA"/>
    <property type="gene ID" value="AAEL011121"/>
</dbReference>
<dbReference type="GeneID" id="5574413"/>
<dbReference type="KEGG" id="aag:5574413"/>
<dbReference type="VEuPathDB" id="VectorBase:AAEL011121"/>
<dbReference type="eggNOG" id="KOG2458">
    <property type="taxonomic scope" value="Eukaryota"/>
</dbReference>
<dbReference type="HOGENOM" id="CLU_041919_1_0_1"/>
<dbReference type="InParanoid" id="Q16QY8"/>
<dbReference type="OMA" id="EDDCMFP"/>
<dbReference type="OrthoDB" id="202415at2759"/>
<dbReference type="PhylomeDB" id="Q16QY8"/>
<dbReference type="UniPathway" id="UPA00378"/>
<dbReference type="Proteomes" id="UP000008820">
    <property type="component" value="Chromosome 3"/>
</dbReference>
<dbReference type="Proteomes" id="UP000682892">
    <property type="component" value="Unassembled WGS sequence"/>
</dbReference>
<dbReference type="GO" id="GO:0005788">
    <property type="term" value="C:endoplasmic reticulum lumen"/>
    <property type="evidence" value="ECO:0007669"/>
    <property type="project" value="UniProtKB-SubCell"/>
</dbReference>
<dbReference type="GO" id="GO:0005576">
    <property type="term" value="C:extracellular region"/>
    <property type="evidence" value="ECO:0007669"/>
    <property type="project" value="UniProtKB-SubCell"/>
</dbReference>
<dbReference type="GO" id="GO:0035251">
    <property type="term" value="F:UDP-glucosyltransferase activity"/>
    <property type="evidence" value="ECO:0000250"/>
    <property type="project" value="UniProtKB"/>
</dbReference>
<dbReference type="GO" id="GO:0035252">
    <property type="term" value="F:UDP-xylosyltransferase activity"/>
    <property type="evidence" value="ECO:0007669"/>
    <property type="project" value="TreeGrafter"/>
</dbReference>
<dbReference type="GO" id="GO:0045747">
    <property type="term" value="P:positive regulation of Notch signaling pathway"/>
    <property type="evidence" value="ECO:0007669"/>
    <property type="project" value="TreeGrafter"/>
</dbReference>
<dbReference type="GO" id="GO:0018242">
    <property type="term" value="P:protein O-linked glycosylation via serine"/>
    <property type="evidence" value="ECO:0000250"/>
    <property type="project" value="UniProtKB"/>
</dbReference>
<dbReference type="InterPro" id="IPR006598">
    <property type="entry name" value="CAP10"/>
</dbReference>
<dbReference type="InterPro" id="IPR051091">
    <property type="entry name" value="O-Glucosyltr/Glycosyltrsf_90"/>
</dbReference>
<dbReference type="PANTHER" id="PTHR12203">
    <property type="entry name" value="KDEL LYS-ASP-GLU-LEU CONTAINING - RELATED"/>
    <property type="match status" value="1"/>
</dbReference>
<dbReference type="PANTHER" id="PTHR12203:SF35">
    <property type="entry name" value="PROTEIN O-GLUCOSYLTRANSFERASE 1"/>
    <property type="match status" value="1"/>
</dbReference>
<dbReference type="Pfam" id="PF05686">
    <property type="entry name" value="Glyco_transf_90"/>
    <property type="match status" value="1"/>
</dbReference>
<dbReference type="SMART" id="SM00672">
    <property type="entry name" value="CAP10"/>
    <property type="match status" value="1"/>
</dbReference>
<protein>
    <recommendedName>
        <fullName>O-glucosyltransferase rumi homolog</fullName>
        <ecNumber evidence="1">2.4.1.-</ecNumber>
    </recommendedName>
</protein>